<proteinExistence type="inferred from homology"/>
<gene>
    <name evidence="1" type="primary">atpB</name>
    <name type="ordered locus">BCI_0147</name>
</gene>
<sequence length="273" mass="31255">MLKLVDNTTTRDYISHHLSHLQLNLNNFTLVNHPDIKSFWILNIDSIFFTLLLGIIFLLIFFYTAKTATSGIPSKLQTIVELLVSFIDKNVNDILFCKNKLIAPLALTIFIWIFLMNLMDLLAVDMLPYIAMYILHIPALRVVPSADINITLSLALGVFILIIYYNLKIKGITGFIKELTMQPFNHLIFIPLNFILESVSLLSKPISLALRLFGNIYAGELVFILIAGLLPWWSQWIISVPWALFHIIVITLQAFIFMVLTVVYIAMAYEQHK</sequence>
<name>ATP6_BAUCH</name>
<feature type="chain" id="PRO_0000362243" description="ATP synthase subunit a">
    <location>
        <begin position="1"/>
        <end position="273"/>
    </location>
</feature>
<feature type="transmembrane region" description="Helical" evidence="1">
    <location>
        <begin position="41"/>
        <end position="61"/>
    </location>
</feature>
<feature type="transmembrane region" description="Helical" evidence="1">
    <location>
        <begin position="101"/>
        <end position="121"/>
    </location>
</feature>
<feature type="transmembrane region" description="Helical" evidence="1">
    <location>
        <begin position="122"/>
        <end position="142"/>
    </location>
</feature>
<feature type="transmembrane region" description="Helical" evidence="1">
    <location>
        <begin position="143"/>
        <end position="163"/>
    </location>
</feature>
<feature type="transmembrane region" description="Helical" evidence="1">
    <location>
        <begin position="183"/>
        <end position="203"/>
    </location>
</feature>
<feature type="transmembrane region" description="Helical" evidence="1">
    <location>
        <begin position="221"/>
        <end position="241"/>
    </location>
</feature>
<feature type="transmembrane region" description="Helical" evidence="1">
    <location>
        <begin position="247"/>
        <end position="267"/>
    </location>
</feature>
<dbReference type="EMBL" id="CP000238">
    <property type="protein sequence ID" value="ABF13912.1"/>
    <property type="molecule type" value="Genomic_DNA"/>
</dbReference>
<dbReference type="RefSeq" id="WP_011520349.1">
    <property type="nucleotide sequence ID" value="NC_007984.1"/>
</dbReference>
<dbReference type="SMR" id="Q1LTU8"/>
<dbReference type="STRING" id="374463.BCI_0147"/>
<dbReference type="KEGG" id="bci:BCI_0147"/>
<dbReference type="HOGENOM" id="CLU_041018_1_0_6"/>
<dbReference type="OrthoDB" id="9789241at2"/>
<dbReference type="Proteomes" id="UP000002427">
    <property type="component" value="Chromosome"/>
</dbReference>
<dbReference type="GO" id="GO:0005886">
    <property type="term" value="C:plasma membrane"/>
    <property type="evidence" value="ECO:0007669"/>
    <property type="project" value="UniProtKB-SubCell"/>
</dbReference>
<dbReference type="GO" id="GO:0045259">
    <property type="term" value="C:proton-transporting ATP synthase complex"/>
    <property type="evidence" value="ECO:0007669"/>
    <property type="project" value="UniProtKB-KW"/>
</dbReference>
<dbReference type="GO" id="GO:0046933">
    <property type="term" value="F:proton-transporting ATP synthase activity, rotational mechanism"/>
    <property type="evidence" value="ECO:0007669"/>
    <property type="project" value="UniProtKB-UniRule"/>
</dbReference>
<dbReference type="GO" id="GO:0042777">
    <property type="term" value="P:proton motive force-driven plasma membrane ATP synthesis"/>
    <property type="evidence" value="ECO:0007669"/>
    <property type="project" value="TreeGrafter"/>
</dbReference>
<dbReference type="CDD" id="cd00310">
    <property type="entry name" value="ATP-synt_Fo_a_6"/>
    <property type="match status" value="1"/>
</dbReference>
<dbReference type="FunFam" id="1.20.120.220:FF:000002">
    <property type="entry name" value="ATP synthase subunit a"/>
    <property type="match status" value="1"/>
</dbReference>
<dbReference type="Gene3D" id="1.20.120.220">
    <property type="entry name" value="ATP synthase, F0 complex, subunit A"/>
    <property type="match status" value="1"/>
</dbReference>
<dbReference type="HAMAP" id="MF_01393">
    <property type="entry name" value="ATP_synth_a_bact"/>
    <property type="match status" value="1"/>
</dbReference>
<dbReference type="InterPro" id="IPR045082">
    <property type="entry name" value="ATP_syn_F0_a_bact/chloroplast"/>
</dbReference>
<dbReference type="InterPro" id="IPR000568">
    <property type="entry name" value="ATP_synth_F0_asu"/>
</dbReference>
<dbReference type="InterPro" id="IPR023011">
    <property type="entry name" value="ATP_synth_F0_asu_AS"/>
</dbReference>
<dbReference type="InterPro" id="IPR035908">
    <property type="entry name" value="F0_ATP_A_sf"/>
</dbReference>
<dbReference type="NCBIfam" id="TIGR01131">
    <property type="entry name" value="ATP_synt_6_or_A"/>
    <property type="match status" value="1"/>
</dbReference>
<dbReference type="NCBIfam" id="NF004477">
    <property type="entry name" value="PRK05815.1-1"/>
    <property type="match status" value="1"/>
</dbReference>
<dbReference type="PANTHER" id="PTHR42823">
    <property type="entry name" value="ATP SYNTHASE SUBUNIT A, CHLOROPLASTIC"/>
    <property type="match status" value="1"/>
</dbReference>
<dbReference type="PANTHER" id="PTHR42823:SF3">
    <property type="entry name" value="ATP SYNTHASE SUBUNIT A, CHLOROPLASTIC"/>
    <property type="match status" value="1"/>
</dbReference>
<dbReference type="Pfam" id="PF00119">
    <property type="entry name" value="ATP-synt_A"/>
    <property type="match status" value="1"/>
</dbReference>
<dbReference type="PRINTS" id="PR00123">
    <property type="entry name" value="ATPASEA"/>
</dbReference>
<dbReference type="SUPFAM" id="SSF81336">
    <property type="entry name" value="F1F0 ATP synthase subunit A"/>
    <property type="match status" value="1"/>
</dbReference>
<dbReference type="PROSITE" id="PS00449">
    <property type="entry name" value="ATPASE_A"/>
    <property type="match status" value="1"/>
</dbReference>
<accession>Q1LTU8</accession>
<keyword id="KW-0066">ATP synthesis</keyword>
<keyword id="KW-1003">Cell membrane</keyword>
<keyword id="KW-0138">CF(0)</keyword>
<keyword id="KW-0375">Hydrogen ion transport</keyword>
<keyword id="KW-0406">Ion transport</keyword>
<keyword id="KW-0472">Membrane</keyword>
<keyword id="KW-1185">Reference proteome</keyword>
<keyword id="KW-0812">Transmembrane</keyword>
<keyword id="KW-1133">Transmembrane helix</keyword>
<keyword id="KW-0813">Transport</keyword>
<protein>
    <recommendedName>
        <fullName evidence="1">ATP synthase subunit a</fullName>
    </recommendedName>
    <alternativeName>
        <fullName evidence="1">ATP synthase F0 sector subunit a</fullName>
    </alternativeName>
    <alternativeName>
        <fullName evidence="1">F-ATPase subunit 6</fullName>
    </alternativeName>
</protein>
<evidence type="ECO:0000255" key="1">
    <source>
        <dbReference type="HAMAP-Rule" id="MF_01393"/>
    </source>
</evidence>
<comment type="function">
    <text evidence="1">Key component of the proton channel; it plays a direct role in the translocation of protons across the membrane.</text>
</comment>
<comment type="subunit">
    <text evidence="1">F-type ATPases have 2 components, CF(1) - the catalytic core - and CF(0) - the membrane proton channel. CF(1) has five subunits: alpha(3), beta(3), gamma(1), delta(1), epsilon(1). CF(0) has three main subunits: a(1), b(2) and c(9-12). The alpha and beta chains form an alternating ring which encloses part of the gamma chain. CF(1) is attached to CF(0) by a central stalk formed by the gamma and epsilon chains, while a peripheral stalk is formed by the delta and b chains.</text>
</comment>
<comment type="subcellular location">
    <subcellularLocation>
        <location evidence="1">Cell membrane</location>
        <topology evidence="1">Multi-pass membrane protein</topology>
    </subcellularLocation>
</comment>
<comment type="similarity">
    <text evidence="1">Belongs to the ATPase A chain family.</text>
</comment>
<reference key="1">
    <citation type="journal article" date="2006" name="PLoS Biol.">
        <title>Metabolic complementarity and genomics of the dual bacterial symbiosis of sharpshooters.</title>
        <authorList>
            <person name="Wu D."/>
            <person name="Daugherty S.C."/>
            <person name="Van Aken S.E."/>
            <person name="Pai G.H."/>
            <person name="Watkins K.L."/>
            <person name="Khouri H."/>
            <person name="Tallon L.J."/>
            <person name="Zaborsky J.M."/>
            <person name="Dunbar H.E."/>
            <person name="Tran P.L."/>
            <person name="Moran N.A."/>
            <person name="Eisen J.A."/>
        </authorList>
    </citation>
    <scope>NUCLEOTIDE SEQUENCE [LARGE SCALE GENOMIC DNA]</scope>
</reference>
<organism>
    <name type="scientific">Baumannia cicadellinicola subsp. Homalodisca coagulata</name>
    <dbReference type="NCBI Taxonomy" id="374463"/>
    <lineage>
        <taxon>Bacteria</taxon>
        <taxon>Pseudomonadati</taxon>
        <taxon>Pseudomonadota</taxon>
        <taxon>Gammaproteobacteria</taxon>
        <taxon>Candidatus Palibaumannia</taxon>
    </lineage>
</organism>